<proteinExistence type="inferred from homology"/>
<organism>
    <name type="scientific">Bovine coronavirus (strain LY-138)</name>
    <name type="common">BCoV</name>
    <name type="synonym">BCV</name>
    <dbReference type="NCBI Taxonomy" id="11131"/>
    <lineage>
        <taxon>Viruses</taxon>
        <taxon>Riboviria</taxon>
        <taxon>Orthornavirae</taxon>
        <taxon>Pisuviricota</taxon>
        <taxon>Pisoniviricetes</taxon>
        <taxon>Nidovirales</taxon>
        <taxon>Cornidovirineae</taxon>
        <taxon>Coronaviridae</taxon>
        <taxon>Orthocoronavirinae</taxon>
        <taxon>Betacoronavirus</taxon>
        <taxon>Embecovirus</taxon>
        <taxon>Betacoronavirus 1</taxon>
    </lineage>
</organism>
<sequence>MPMATTIDGTDYTNIMPSTVSTTVYLGGSIGIDTSTTGFTCFSWY</sequence>
<organismHost>
    <name type="scientific">Bos taurus</name>
    <name type="common">Bovine</name>
    <dbReference type="NCBI Taxonomy" id="9913"/>
</organismHost>
<reference key="1">
    <citation type="journal article" date="1998" name="Virus Genes">
        <title>Nucleotide and predicted amino acid sequences of all genes encoded by the 3' genomic portion (9.5 kb) of respiratory bovine coronaviruses and comparisons among respiratory and enteric coronaviruses.</title>
        <authorList>
            <person name="Chouljenko V.N."/>
            <person name="Kousoulas K.G."/>
            <person name="Lin X.Q."/>
            <person name="Storz J."/>
        </authorList>
    </citation>
    <scope>NUCLEOTIDE SEQUENCE [GENOMIC RNA]</scope>
</reference>
<gene>
    <name type="ORF">4b</name>
</gene>
<evidence type="ECO:0000305" key="1"/>
<accession>Q9QAS0</accession>
<feature type="chain" id="PRO_0000283961" description="Non-structural protein of 4.8 kDa">
    <location>
        <begin position="1"/>
        <end position="45"/>
    </location>
</feature>
<comment type="similarity">
    <text evidence="1">Belongs to the coronaviruses ns4/ns4.8 protein family.</text>
</comment>
<protein>
    <recommendedName>
        <fullName>Non-structural protein of 4.8 kDa</fullName>
        <shortName>ns4.8</shortName>
    </recommendedName>
    <alternativeName>
        <fullName>4.8 kDa accessory protein</fullName>
    </alternativeName>
</protein>
<dbReference type="EMBL" id="AF058942">
    <property type="protein sequence ID" value="AAF25501.1"/>
    <property type="molecule type" value="Genomic_RNA"/>
</dbReference>
<dbReference type="InterPro" id="IPR005603">
    <property type="entry name" value="Corona_NS4"/>
</dbReference>
<dbReference type="Pfam" id="PF03905">
    <property type="entry name" value="Corona_NS4"/>
    <property type="match status" value="1"/>
</dbReference>
<name>NS48_CVBLY</name>